<dbReference type="EC" id="4.2.1.11" evidence="1"/>
<dbReference type="EMBL" id="CP000300">
    <property type="protein sequence ID" value="ABE52581.1"/>
    <property type="molecule type" value="Genomic_DNA"/>
</dbReference>
<dbReference type="RefSeq" id="WP_011499724.1">
    <property type="nucleotide sequence ID" value="NC_007955.1"/>
</dbReference>
<dbReference type="SMR" id="Q12VE5"/>
<dbReference type="STRING" id="259564.Mbur_1687"/>
<dbReference type="GeneID" id="3998083"/>
<dbReference type="KEGG" id="mbu:Mbur_1687"/>
<dbReference type="HOGENOM" id="CLU_031223_2_1_2"/>
<dbReference type="OrthoDB" id="8680at2157"/>
<dbReference type="UniPathway" id="UPA00109">
    <property type="reaction ID" value="UER00187"/>
</dbReference>
<dbReference type="Proteomes" id="UP000001979">
    <property type="component" value="Chromosome"/>
</dbReference>
<dbReference type="GO" id="GO:0009986">
    <property type="term" value="C:cell surface"/>
    <property type="evidence" value="ECO:0007669"/>
    <property type="project" value="UniProtKB-SubCell"/>
</dbReference>
<dbReference type="GO" id="GO:0005576">
    <property type="term" value="C:extracellular region"/>
    <property type="evidence" value="ECO:0007669"/>
    <property type="project" value="UniProtKB-SubCell"/>
</dbReference>
<dbReference type="GO" id="GO:0000015">
    <property type="term" value="C:phosphopyruvate hydratase complex"/>
    <property type="evidence" value="ECO:0007669"/>
    <property type="project" value="InterPro"/>
</dbReference>
<dbReference type="GO" id="GO:0000287">
    <property type="term" value="F:magnesium ion binding"/>
    <property type="evidence" value="ECO:0007669"/>
    <property type="project" value="UniProtKB-UniRule"/>
</dbReference>
<dbReference type="GO" id="GO:0004634">
    <property type="term" value="F:phosphopyruvate hydratase activity"/>
    <property type="evidence" value="ECO:0007669"/>
    <property type="project" value="UniProtKB-UniRule"/>
</dbReference>
<dbReference type="GO" id="GO:0006096">
    <property type="term" value="P:glycolytic process"/>
    <property type="evidence" value="ECO:0007669"/>
    <property type="project" value="UniProtKB-UniRule"/>
</dbReference>
<dbReference type="CDD" id="cd03313">
    <property type="entry name" value="enolase"/>
    <property type="match status" value="1"/>
</dbReference>
<dbReference type="FunFam" id="3.30.390.10:FF:000001">
    <property type="entry name" value="Enolase"/>
    <property type="match status" value="1"/>
</dbReference>
<dbReference type="Gene3D" id="3.20.20.120">
    <property type="entry name" value="Enolase-like C-terminal domain"/>
    <property type="match status" value="1"/>
</dbReference>
<dbReference type="Gene3D" id="3.30.390.10">
    <property type="entry name" value="Enolase-like, N-terminal domain"/>
    <property type="match status" value="1"/>
</dbReference>
<dbReference type="HAMAP" id="MF_00318">
    <property type="entry name" value="Enolase"/>
    <property type="match status" value="1"/>
</dbReference>
<dbReference type="InterPro" id="IPR000941">
    <property type="entry name" value="Enolase"/>
</dbReference>
<dbReference type="InterPro" id="IPR036849">
    <property type="entry name" value="Enolase-like_C_sf"/>
</dbReference>
<dbReference type="InterPro" id="IPR029017">
    <property type="entry name" value="Enolase-like_N"/>
</dbReference>
<dbReference type="InterPro" id="IPR020810">
    <property type="entry name" value="Enolase_C"/>
</dbReference>
<dbReference type="InterPro" id="IPR020809">
    <property type="entry name" value="Enolase_CS"/>
</dbReference>
<dbReference type="InterPro" id="IPR020811">
    <property type="entry name" value="Enolase_N"/>
</dbReference>
<dbReference type="NCBIfam" id="TIGR01060">
    <property type="entry name" value="eno"/>
    <property type="match status" value="1"/>
</dbReference>
<dbReference type="PANTHER" id="PTHR11902">
    <property type="entry name" value="ENOLASE"/>
    <property type="match status" value="1"/>
</dbReference>
<dbReference type="PANTHER" id="PTHR11902:SF1">
    <property type="entry name" value="ENOLASE"/>
    <property type="match status" value="1"/>
</dbReference>
<dbReference type="Pfam" id="PF00113">
    <property type="entry name" value="Enolase_C"/>
    <property type="match status" value="1"/>
</dbReference>
<dbReference type="Pfam" id="PF03952">
    <property type="entry name" value="Enolase_N"/>
    <property type="match status" value="1"/>
</dbReference>
<dbReference type="PIRSF" id="PIRSF001400">
    <property type="entry name" value="Enolase"/>
    <property type="match status" value="1"/>
</dbReference>
<dbReference type="PRINTS" id="PR00148">
    <property type="entry name" value="ENOLASE"/>
</dbReference>
<dbReference type="SFLD" id="SFLDS00001">
    <property type="entry name" value="Enolase"/>
    <property type="match status" value="1"/>
</dbReference>
<dbReference type="SFLD" id="SFLDF00002">
    <property type="entry name" value="enolase"/>
    <property type="match status" value="1"/>
</dbReference>
<dbReference type="SMART" id="SM01192">
    <property type="entry name" value="Enolase_C"/>
    <property type="match status" value="1"/>
</dbReference>
<dbReference type="SMART" id="SM01193">
    <property type="entry name" value="Enolase_N"/>
    <property type="match status" value="1"/>
</dbReference>
<dbReference type="SUPFAM" id="SSF51604">
    <property type="entry name" value="Enolase C-terminal domain-like"/>
    <property type="match status" value="1"/>
</dbReference>
<dbReference type="SUPFAM" id="SSF54826">
    <property type="entry name" value="Enolase N-terminal domain-like"/>
    <property type="match status" value="1"/>
</dbReference>
<dbReference type="PROSITE" id="PS00164">
    <property type="entry name" value="ENOLASE"/>
    <property type="match status" value="1"/>
</dbReference>
<feature type="chain" id="PRO_0000267141" description="Enolase">
    <location>
        <begin position="1"/>
        <end position="425"/>
    </location>
</feature>
<feature type="active site" description="Proton donor" evidence="1">
    <location>
        <position position="214"/>
    </location>
</feature>
<feature type="active site" description="Proton acceptor" evidence="1">
    <location>
        <position position="342"/>
    </location>
</feature>
<feature type="binding site" evidence="1">
    <location>
        <position position="170"/>
    </location>
    <ligand>
        <name>(2R)-2-phosphoglycerate</name>
        <dbReference type="ChEBI" id="CHEBI:58289"/>
    </ligand>
</feature>
<feature type="binding site" evidence="1">
    <location>
        <position position="250"/>
    </location>
    <ligand>
        <name>Mg(2+)</name>
        <dbReference type="ChEBI" id="CHEBI:18420"/>
    </ligand>
</feature>
<feature type="binding site" evidence="1">
    <location>
        <position position="291"/>
    </location>
    <ligand>
        <name>Mg(2+)</name>
        <dbReference type="ChEBI" id="CHEBI:18420"/>
    </ligand>
</feature>
<feature type="binding site" evidence="1">
    <location>
        <position position="317"/>
    </location>
    <ligand>
        <name>Mg(2+)</name>
        <dbReference type="ChEBI" id="CHEBI:18420"/>
    </ligand>
</feature>
<feature type="binding site" evidence="1">
    <location>
        <position position="342"/>
    </location>
    <ligand>
        <name>(2R)-2-phosphoglycerate</name>
        <dbReference type="ChEBI" id="CHEBI:58289"/>
    </ligand>
</feature>
<feature type="binding site" evidence="1">
    <location>
        <position position="371"/>
    </location>
    <ligand>
        <name>(2R)-2-phosphoglycerate</name>
        <dbReference type="ChEBI" id="CHEBI:58289"/>
    </ligand>
</feature>
<feature type="binding site" evidence="1">
    <location>
        <position position="372"/>
    </location>
    <ligand>
        <name>(2R)-2-phosphoglycerate</name>
        <dbReference type="ChEBI" id="CHEBI:58289"/>
    </ligand>
</feature>
<feature type="binding site" evidence="1">
    <location>
        <position position="393"/>
    </location>
    <ligand>
        <name>(2R)-2-phosphoglycerate</name>
        <dbReference type="ChEBI" id="CHEBI:58289"/>
    </ligand>
</feature>
<evidence type="ECO:0000255" key="1">
    <source>
        <dbReference type="HAMAP-Rule" id="MF_00318"/>
    </source>
</evidence>
<sequence>MNSISEEAKYTIQKVHAREILDSRGNPTVEVDIYTGCGFGRASVPSGASTGSNEALELRDKDADRYNGKGVLKAVDNINKTLSKELLGMDARNQREIDELMIALDGTENKKTFGANAILGISMATAKAAADSLGIALYRYLGGTNAFALPVPTMNVINGGKHAGNDLSIQEFMIQPKGADTFSNALRMGAETYHALGKVLEDKYGASATNVGYEGGYAPPISTTADALDALVSAIEEAGYTESEISIGLDSAASEFFDGDKYFIDGNKLAPAELVDYYLDLIETYPILSIEDPFHEESFEDFAALTSEAWDTIIVGDDLFVTNVNRLAKGIEMEAANALLLKVNQIGTISESFDAANLAQRNGYSVVVSHRSAETEDTMIADISVAIGGDLIKTGAPARSERTAKYNQLLRIEEDLGDAARYVQL</sequence>
<comment type="function">
    <text evidence="1">Catalyzes the reversible conversion of 2-phosphoglycerate (2-PG) into phosphoenolpyruvate (PEP). It is essential for the degradation of carbohydrates via glycolysis.</text>
</comment>
<comment type="catalytic activity">
    <reaction evidence="1">
        <text>(2R)-2-phosphoglycerate = phosphoenolpyruvate + H2O</text>
        <dbReference type="Rhea" id="RHEA:10164"/>
        <dbReference type="ChEBI" id="CHEBI:15377"/>
        <dbReference type="ChEBI" id="CHEBI:58289"/>
        <dbReference type="ChEBI" id="CHEBI:58702"/>
        <dbReference type="EC" id="4.2.1.11"/>
    </reaction>
</comment>
<comment type="cofactor">
    <cofactor evidence="1">
        <name>Mg(2+)</name>
        <dbReference type="ChEBI" id="CHEBI:18420"/>
    </cofactor>
    <text evidence="1">Binds a second Mg(2+) ion via substrate during catalysis.</text>
</comment>
<comment type="pathway">
    <text evidence="1">Carbohydrate degradation; glycolysis; pyruvate from D-glyceraldehyde 3-phosphate: step 4/5.</text>
</comment>
<comment type="subcellular location">
    <subcellularLocation>
        <location evidence="1">Cytoplasm</location>
    </subcellularLocation>
    <subcellularLocation>
        <location evidence="1">Secreted</location>
    </subcellularLocation>
    <subcellularLocation>
        <location evidence="1">Cell surface</location>
    </subcellularLocation>
    <text evidence="1">Fractions of enolase are present in both the cytoplasm and on the cell surface.</text>
</comment>
<comment type="similarity">
    <text evidence="1">Belongs to the enolase family.</text>
</comment>
<name>ENO_METBU</name>
<proteinExistence type="inferred from homology"/>
<protein>
    <recommendedName>
        <fullName evidence="1">Enolase</fullName>
        <ecNumber evidence="1">4.2.1.11</ecNumber>
    </recommendedName>
    <alternativeName>
        <fullName evidence="1">2-phospho-D-glycerate hydro-lyase</fullName>
    </alternativeName>
    <alternativeName>
        <fullName evidence="1">2-phosphoglycerate dehydratase</fullName>
    </alternativeName>
</protein>
<gene>
    <name evidence="1" type="primary">eno</name>
    <name type="ordered locus">Mbur_1687</name>
</gene>
<reference key="1">
    <citation type="journal article" date="2009" name="ISME J.">
        <title>The genome sequence of the psychrophilic archaeon, Methanococcoides burtonii: the role of genome evolution in cold adaptation.</title>
        <authorList>
            <person name="Allen M.A."/>
            <person name="Lauro F.M."/>
            <person name="Williams T.J."/>
            <person name="Burg D."/>
            <person name="Siddiqui K.S."/>
            <person name="De Francisci D."/>
            <person name="Chong K.W."/>
            <person name="Pilak O."/>
            <person name="Chew H.H."/>
            <person name="De Maere M.Z."/>
            <person name="Ting L."/>
            <person name="Katrib M."/>
            <person name="Ng C."/>
            <person name="Sowers K.R."/>
            <person name="Galperin M.Y."/>
            <person name="Anderson I.J."/>
            <person name="Ivanova N."/>
            <person name="Dalin E."/>
            <person name="Martinez M."/>
            <person name="Lapidus A."/>
            <person name="Hauser L."/>
            <person name="Land M."/>
            <person name="Thomas T."/>
            <person name="Cavicchioli R."/>
        </authorList>
    </citation>
    <scope>NUCLEOTIDE SEQUENCE [LARGE SCALE GENOMIC DNA]</scope>
    <source>
        <strain>DSM 6242 / NBRC 107633 / OCM 468 / ACE-M</strain>
    </source>
</reference>
<organism>
    <name type="scientific">Methanococcoides burtonii (strain DSM 6242 / NBRC 107633 / OCM 468 / ACE-M)</name>
    <dbReference type="NCBI Taxonomy" id="259564"/>
    <lineage>
        <taxon>Archaea</taxon>
        <taxon>Methanobacteriati</taxon>
        <taxon>Methanobacteriota</taxon>
        <taxon>Stenosarchaea group</taxon>
        <taxon>Methanomicrobia</taxon>
        <taxon>Methanosarcinales</taxon>
        <taxon>Methanosarcinaceae</taxon>
        <taxon>Methanococcoides</taxon>
    </lineage>
</organism>
<accession>Q12VE5</accession>
<keyword id="KW-0963">Cytoplasm</keyword>
<keyword id="KW-0324">Glycolysis</keyword>
<keyword id="KW-0456">Lyase</keyword>
<keyword id="KW-0460">Magnesium</keyword>
<keyword id="KW-0479">Metal-binding</keyword>
<keyword id="KW-0964">Secreted</keyword>